<proteinExistence type="evidence at protein level"/>
<protein>
    <recommendedName>
        <fullName>Sorting nexin-10</fullName>
    </recommendedName>
</protein>
<accession>Q9CWT3</accession>
<accession>Q8C1E0</accession>
<sequence length="201" mass="23542">MFPEQQKEEFVSVWVRDPRIQKEDFWHSYIDYEICIHTNSMCFTMKTSCVRRRYREFVWLRQRLQSNALLVQLPELPSKNLFFNMNNRQHVDQRRQGLEDFLRKVLQNALLLSDSSLHLFLQSHLNSEDIEACVSGQTKYSVEEAIHKFALMNRRFPEEEEEGKKDADVEYDSESSSSGLGHSSDDSSSHGCKTSPALQES</sequence>
<keyword id="KW-0970">Cilium biogenesis/degradation</keyword>
<keyword id="KW-0963">Cytoplasm</keyword>
<keyword id="KW-0206">Cytoskeleton</keyword>
<keyword id="KW-0967">Endosome</keyword>
<keyword id="KW-0446">Lipid-binding</keyword>
<keyword id="KW-0472">Membrane</keyword>
<keyword id="KW-0653">Protein transport</keyword>
<keyword id="KW-1185">Reference proteome</keyword>
<keyword id="KW-0813">Transport</keyword>
<organism>
    <name type="scientific">Mus musculus</name>
    <name type="common">Mouse</name>
    <dbReference type="NCBI Taxonomy" id="10090"/>
    <lineage>
        <taxon>Eukaryota</taxon>
        <taxon>Metazoa</taxon>
        <taxon>Chordata</taxon>
        <taxon>Craniata</taxon>
        <taxon>Vertebrata</taxon>
        <taxon>Euteleostomi</taxon>
        <taxon>Mammalia</taxon>
        <taxon>Eutheria</taxon>
        <taxon>Euarchontoglires</taxon>
        <taxon>Glires</taxon>
        <taxon>Rodentia</taxon>
        <taxon>Myomorpha</taxon>
        <taxon>Muroidea</taxon>
        <taxon>Muridae</taxon>
        <taxon>Murinae</taxon>
        <taxon>Mus</taxon>
        <taxon>Mus</taxon>
    </lineage>
</organism>
<name>SNX10_MOUSE</name>
<dbReference type="EMBL" id="AK010399">
    <property type="protein sequence ID" value="BAB26910.1"/>
    <property type="molecule type" value="mRNA"/>
</dbReference>
<dbReference type="EMBL" id="AK028163">
    <property type="protein sequence ID" value="BAC25786.1"/>
    <property type="molecule type" value="mRNA"/>
</dbReference>
<dbReference type="EMBL" id="BC010334">
    <property type="protein sequence ID" value="AAH10334.1"/>
    <property type="molecule type" value="mRNA"/>
</dbReference>
<dbReference type="CCDS" id="CCDS20136.1"/>
<dbReference type="RefSeq" id="NP_001120820.1">
    <property type="nucleotide sequence ID" value="NM_001127348.1"/>
</dbReference>
<dbReference type="RefSeq" id="NP_001120821.1">
    <property type="nucleotide sequence ID" value="NM_001127349.1"/>
</dbReference>
<dbReference type="RefSeq" id="NP_001348505.1">
    <property type="nucleotide sequence ID" value="NM_001361576.1"/>
</dbReference>
<dbReference type="RefSeq" id="NP_001348506.1">
    <property type="nucleotide sequence ID" value="NM_001361577.1"/>
</dbReference>
<dbReference type="RefSeq" id="NP_001348507.1">
    <property type="nucleotide sequence ID" value="NM_001361578.1"/>
</dbReference>
<dbReference type="RefSeq" id="NP_001348508.1">
    <property type="nucleotide sequence ID" value="NM_001361579.1"/>
</dbReference>
<dbReference type="RefSeq" id="NP_001348509.1">
    <property type="nucleotide sequence ID" value="NM_001361580.1"/>
</dbReference>
<dbReference type="RefSeq" id="NP_001348510.1">
    <property type="nucleotide sequence ID" value="NM_001361581.1"/>
</dbReference>
<dbReference type="RefSeq" id="NP_082311.3">
    <property type="nucleotide sequence ID" value="NM_028035.4"/>
</dbReference>
<dbReference type="RefSeq" id="XP_006506716.1">
    <property type="nucleotide sequence ID" value="XM_006506653.3"/>
</dbReference>
<dbReference type="RefSeq" id="XP_017177242.1">
    <property type="nucleotide sequence ID" value="XM_017321753.1"/>
</dbReference>
<dbReference type="RefSeq" id="XP_030111460.1">
    <property type="nucleotide sequence ID" value="XM_030255600.2"/>
</dbReference>
<dbReference type="SMR" id="Q9CWT3"/>
<dbReference type="FunCoup" id="Q9CWT3">
    <property type="interactions" value="971"/>
</dbReference>
<dbReference type="STRING" id="10090.ENSMUSP00000044165"/>
<dbReference type="iPTMnet" id="Q9CWT3"/>
<dbReference type="PhosphoSitePlus" id="Q9CWT3"/>
<dbReference type="jPOST" id="Q9CWT3"/>
<dbReference type="PaxDb" id="10090-ENSMUSP00000044165"/>
<dbReference type="ProteomicsDB" id="261538"/>
<dbReference type="Pumba" id="Q9CWT3"/>
<dbReference type="Antibodypedia" id="1917">
    <property type="antibodies" value="150 antibodies from 19 providers"/>
</dbReference>
<dbReference type="DNASU" id="71982"/>
<dbReference type="Ensembl" id="ENSMUST00000049152.15">
    <property type="protein sequence ID" value="ENSMUSP00000044165.9"/>
    <property type="gene ID" value="ENSMUSG00000038301.16"/>
</dbReference>
<dbReference type="Ensembl" id="ENSMUST00000114439.8">
    <property type="protein sequence ID" value="ENSMUSP00000110082.2"/>
    <property type="gene ID" value="ENSMUSG00000038301.16"/>
</dbReference>
<dbReference type="Ensembl" id="ENSMUST00000179365.8">
    <property type="protein sequence ID" value="ENSMUSP00000136974.2"/>
    <property type="gene ID" value="ENSMUSG00000038301.16"/>
</dbReference>
<dbReference type="GeneID" id="71982"/>
<dbReference type="KEGG" id="mmu:71982"/>
<dbReference type="UCSC" id="uc009bxs.2">
    <property type="organism name" value="mouse"/>
</dbReference>
<dbReference type="AGR" id="MGI:1919232"/>
<dbReference type="CTD" id="29887"/>
<dbReference type="MGI" id="MGI:1919232">
    <property type="gene designation" value="Snx10"/>
</dbReference>
<dbReference type="VEuPathDB" id="HostDB:ENSMUSG00000038301"/>
<dbReference type="eggNOG" id="KOG2527">
    <property type="taxonomic scope" value="Eukaryota"/>
</dbReference>
<dbReference type="GeneTree" id="ENSGT00940000156007"/>
<dbReference type="InParanoid" id="Q9CWT3"/>
<dbReference type="OMA" id="SMLMVQL"/>
<dbReference type="OrthoDB" id="5227681at2759"/>
<dbReference type="PhylomeDB" id="Q9CWT3"/>
<dbReference type="TreeFam" id="TF332117"/>
<dbReference type="BioGRID-ORCS" id="71982">
    <property type="hits" value="1 hit in 79 CRISPR screens"/>
</dbReference>
<dbReference type="ChiTaRS" id="Snx10">
    <property type="organism name" value="mouse"/>
</dbReference>
<dbReference type="PRO" id="PR:Q9CWT3"/>
<dbReference type="Proteomes" id="UP000000589">
    <property type="component" value="Chromosome 6"/>
</dbReference>
<dbReference type="RNAct" id="Q9CWT3">
    <property type="molecule type" value="protein"/>
</dbReference>
<dbReference type="Bgee" id="ENSMUSG00000038301">
    <property type="expression patterns" value="Expressed in granulocyte and 253 other cell types or tissues"/>
</dbReference>
<dbReference type="ExpressionAtlas" id="Q9CWT3">
    <property type="expression patterns" value="baseline and differential"/>
</dbReference>
<dbReference type="GO" id="GO:0090651">
    <property type="term" value="C:apical cytoplasm"/>
    <property type="evidence" value="ECO:0000314"/>
    <property type="project" value="MGI"/>
</dbReference>
<dbReference type="GO" id="GO:0005813">
    <property type="term" value="C:centrosome"/>
    <property type="evidence" value="ECO:0007669"/>
    <property type="project" value="UniProtKB-SubCell"/>
</dbReference>
<dbReference type="GO" id="GO:0005783">
    <property type="term" value="C:endoplasmic reticulum"/>
    <property type="evidence" value="ECO:0000314"/>
    <property type="project" value="UniProtKB"/>
</dbReference>
<dbReference type="GO" id="GO:0031313">
    <property type="term" value="C:extrinsic component of endosome membrane"/>
    <property type="evidence" value="ECO:0000250"/>
    <property type="project" value="UniProtKB"/>
</dbReference>
<dbReference type="GO" id="GO:0005634">
    <property type="term" value="C:nucleus"/>
    <property type="evidence" value="ECO:0000314"/>
    <property type="project" value="UniProtKB"/>
</dbReference>
<dbReference type="GO" id="GO:0030141">
    <property type="term" value="C:secretory granule"/>
    <property type="evidence" value="ECO:0000314"/>
    <property type="project" value="MGI"/>
</dbReference>
<dbReference type="GO" id="GO:0005545">
    <property type="term" value="F:1-phosphatidylinositol binding"/>
    <property type="evidence" value="ECO:0000250"/>
    <property type="project" value="UniProtKB"/>
</dbReference>
<dbReference type="GO" id="GO:0051117">
    <property type="term" value="F:ATPase binding"/>
    <property type="evidence" value="ECO:0007669"/>
    <property type="project" value="Ensembl"/>
</dbReference>
<dbReference type="GO" id="GO:0035630">
    <property type="term" value="P:bone mineralization involved in bone maturation"/>
    <property type="evidence" value="ECO:0000315"/>
    <property type="project" value="MGI"/>
</dbReference>
<dbReference type="GO" id="GO:0046849">
    <property type="term" value="P:bone remodeling"/>
    <property type="evidence" value="ECO:0000315"/>
    <property type="project" value="MGI"/>
</dbReference>
<dbReference type="GO" id="GO:0045453">
    <property type="term" value="P:bone resorption"/>
    <property type="evidence" value="ECO:0000315"/>
    <property type="project" value="MGI"/>
</dbReference>
<dbReference type="GO" id="GO:0055074">
    <property type="term" value="P:calcium ion homeostasis"/>
    <property type="evidence" value="ECO:0000315"/>
    <property type="project" value="MGI"/>
</dbReference>
<dbReference type="GO" id="GO:0019725">
    <property type="term" value="P:cellular homeostasis"/>
    <property type="evidence" value="ECO:0000315"/>
    <property type="project" value="MGI"/>
</dbReference>
<dbReference type="GO" id="GO:1990830">
    <property type="term" value="P:cellular response to leukemia inhibitory factor"/>
    <property type="evidence" value="ECO:0000270"/>
    <property type="project" value="MGI"/>
</dbReference>
<dbReference type="GO" id="GO:0060271">
    <property type="term" value="P:cilium assembly"/>
    <property type="evidence" value="ECO:0000250"/>
    <property type="project" value="UniProtKB"/>
</dbReference>
<dbReference type="GO" id="GO:0006897">
    <property type="term" value="P:endocytosis"/>
    <property type="evidence" value="ECO:0000315"/>
    <property type="project" value="MGI"/>
</dbReference>
<dbReference type="GO" id="GO:0007032">
    <property type="term" value="P:endosome organization"/>
    <property type="evidence" value="ECO:0000250"/>
    <property type="project" value="UniProtKB"/>
</dbReference>
<dbReference type="GO" id="GO:0051649">
    <property type="term" value="P:establishment of localization in cell"/>
    <property type="evidence" value="ECO:0000315"/>
    <property type="project" value="MGI"/>
</dbReference>
<dbReference type="GO" id="GO:0001696">
    <property type="term" value="P:gastric acid secretion"/>
    <property type="evidence" value="ECO:0000315"/>
    <property type="project" value="MGI"/>
</dbReference>
<dbReference type="GO" id="GO:0006886">
    <property type="term" value="P:intracellular protein transport"/>
    <property type="evidence" value="ECO:0007669"/>
    <property type="project" value="InterPro"/>
</dbReference>
<dbReference type="GO" id="GO:0030316">
    <property type="term" value="P:osteoclast differentiation"/>
    <property type="evidence" value="ECO:0000315"/>
    <property type="project" value="UniProtKB"/>
</dbReference>
<dbReference type="GO" id="GO:0071539">
    <property type="term" value="P:protein localization to centrosome"/>
    <property type="evidence" value="ECO:0000250"/>
    <property type="project" value="UniProtKB"/>
</dbReference>
<dbReference type="GO" id="GO:0061512">
    <property type="term" value="P:protein localization to cilium"/>
    <property type="evidence" value="ECO:0000250"/>
    <property type="project" value="UniProtKB"/>
</dbReference>
<dbReference type="GO" id="GO:0097178">
    <property type="term" value="P:ruffle assembly"/>
    <property type="evidence" value="ECO:0000315"/>
    <property type="project" value="MGI"/>
</dbReference>
<dbReference type="GO" id="GO:0044691">
    <property type="term" value="P:tooth eruption"/>
    <property type="evidence" value="ECO:0000315"/>
    <property type="project" value="MGI"/>
</dbReference>
<dbReference type="CDD" id="cd06898">
    <property type="entry name" value="PX_SNX10"/>
    <property type="match status" value="1"/>
</dbReference>
<dbReference type="FunFam" id="3.30.1520.10:FF:000012">
    <property type="entry name" value="Sorting nexin 10"/>
    <property type="match status" value="1"/>
</dbReference>
<dbReference type="Gene3D" id="3.30.1520.10">
    <property type="entry name" value="Phox-like domain"/>
    <property type="match status" value="1"/>
</dbReference>
<dbReference type="InterPro" id="IPR001683">
    <property type="entry name" value="PX_dom"/>
</dbReference>
<dbReference type="InterPro" id="IPR036871">
    <property type="entry name" value="PX_dom_sf"/>
</dbReference>
<dbReference type="InterPro" id="IPR043544">
    <property type="entry name" value="SNX10/11"/>
</dbReference>
<dbReference type="PANTHER" id="PTHR46209">
    <property type="entry name" value="PX DOMAIN-CONTAINING PROTEIN"/>
    <property type="match status" value="1"/>
</dbReference>
<dbReference type="PANTHER" id="PTHR46209:SF2">
    <property type="entry name" value="SORTING NEXIN-10"/>
    <property type="match status" value="1"/>
</dbReference>
<dbReference type="Pfam" id="PF00787">
    <property type="entry name" value="PX"/>
    <property type="match status" value="1"/>
</dbReference>
<dbReference type="SMART" id="SM00312">
    <property type="entry name" value="PX"/>
    <property type="match status" value="1"/>
</dbReference>
<dbReference type="SUPFAM" id="SSF64268">
    <property type="entry name" value="PX domain"/>
    <property type="match status" value="1"/>
</dbReference>
<dbReference type="PROSITE" id="PS50195">
    <property type="entry name" value="PX"/>
    <property type="match status" value="1"/>
</dbReference>
<feature type="chain" id="PRO_0000213855" description="Sorting nexin-10">
    <location>
        <begin position="1"/>
        <end position="201"/>
    </location>
</feature>
<feature type="domain" description="PX" evidence="2">
    <location>
        <begin position="10"/>
        <end position="127"/>
    </location>
</feature>
<feature type="region of interest" description="Required for interaction with ATP6V1D" evidence="1">
    <location>
        <begin position="8"/>
        <end position="125"/>
    </location>
</feature>
<feature type="region of interest" description="Disordered" evidence="3">
    <location>
        <begin position="155"/>
        <end position="201"/>
    </location>
</feature>
<feature type="binding site" evidence="1">
    <location>
        <position position="53"/>
    </location>
    <ligand>
        <name>a 1,2-diacyl-sn-glycero-3-phospho-(1D-myo-inositol-3-phosphate)</name>
        <dbReference type="ChEBI" id="CHEBI:58088"/>
    </ligand>
</feature>
<feature type="binding site" evidence="1">
    <location>
        <position position="79"/>
    </location>
    <ligand>
        <name>a 1,2-diacyl-sn-glycero-3-phospho-(1D-myo-inositol-3-phosphate)</name>
        <dbReference type="ChEBI" id="CHEBI:58088"/>
    </ligand>
</feature>
<feature type="binding site" evidence="1">
    <location>
        <position position="94"/>
    </location>
    <ligand>
        <name>a 1,2-diacyl-sn-glycero-3-phospho-(1D-myo-inositol-3-phosphate)</name>
        <dbReference type="ChEBI" id="CHEBI:58088"/>
    </ligand>
</feature>
<feature type="sequence conflict" description="In Ref. 1; BAC25786." evidence="5" ref="1">
    <original>D</original>
    <variation>E</variation>
    <location>
        <position position="168"/>
    </location>
</feature>
<comment type="function">
    <text evidence="4">Probable phosphoinositide-binding protein involved in protein sorting and membrane trafficking in endosomes. Plays a role in cilium biogenesis through regulation of the transport and the localization of proteins to the cilium. Required for the localization to the cilium of V-ATPase subunit ATP6V1D and ATP6V0D1, and RAB8A. Involved in osteoclast differentiation and therefore bone resorption.</text>
</comment>
<comment type="subunit">
    <text evidence="1">Interacts with ATP6V1D; may play a role in ciliogenesis.</text>
</comment>
<comment type="subcellular location">
    <subcellularLocation>
        <location evidence="4">Cytoplasm</location>
    </subcellularLocation>
    <subcellularLocation>
        <location evidence="4">Endosome membrane</location>
        <topology evidence="4">Peripheral membrane protein</topology>
        <orientation evidence="4">Cytoplasmic side</orientation>
    </subcellularLocation>
    <subcellularLocation>
        <location evidence="1">Cytoplasm</location>
        <location evidence="1">Cytoskeleton</location>
        <location evidence="1">Microtubule organizing center</location>
        <location evidence="1">Centrosome</location>
    </subcellularLocation>
    <text>May also localize to nucleus and endoplasmic reticulum.</text>
</comment>
<comment type="tissue specificity">
    <text evidence="4">Expressed in femur, calvariae and teeth.</text>
</comment>
<comment type="developmental stage">
    <text evidence="4">Strongly up-regulated during osteoclastogenesis. Expressed in calvariae and developing teeth as early as 16.5 dpc (at protein level).</text>
</comment>
<comment type="domain">
    <text evidence="1">The PX domain mediates interaction with membranes enriched in phosphatidylinositol 3-phosphate.</text>
</comment>
<comment type="similarity">
    <text evidence="5">Belongs to the sorting nexin family.</text>
</comment>
<gene>
    <name type="primary">Snx10</name>
</gene>
<reference key="1">
    <citation type="journal article" date="2005" name="Science">
        <title>The transcriptional landscape of the mammalian genome.</title>
        <authorList>
            <person name="Carninci P."/>
            <person name="Kasukawa T."/>
            <person name="Katayama S."/>
            <person name="Gough J."/>
            <person name="Frith M.C."/>
            <person name="Maeda N."/>
            <person name="Oyama R."/>
            <person name="Ravasi T."/>
            <person name="Lenhard B."/>
            <person name="Wells C."/>
            <person name="Kodzius R."/>
            <person name="Shimokawa K."/>
            <person name="Bajic V.B."/>
            <person name="Brenner S.E."/>
            <person name="Batalov S."/>
            <person name="Forrest A.R."/>
            <person name="Zavolan M."/>
            <person name="Davis M.J."/>
            <person name="Wilming L.G."/>
            <person name="Aidinis V."/>
            <person name="Allen J.E."/>
            <person name="Ambesi-Impiombato A."/>
            <person name="Apweiler R."/>
            <person name="Aturaliya R.N."/>
            <person name="Bailey T.L."/>
            <person name="Bansal M."/>
            <person name="Baxter L."/>
            <person name="Beisel K.W."/>
            <person name="Bersano T."/>
            <person name="Bono H."/>
            <person name="Chalk A.M."/>
            <person name="Chiu K.P."/>
            <person name="Choudhary V."/>
            <person name="Christoffels A."/>
            <person name="Clutterbuck D.R."/>
            <person name="Crowe M.L."/>
            <person name="Dalla E."/>
            <person name="Dalrymple B.P."/>
            <person name="de Bono B."/>
            <person name="Della Gatta G."/>
            <person name="di Bernardo D."/>
            <person name="Down T."/>
            <person name="Engstrom P."/>
            <person name="Fagiolini M."/>
            <person name="Faulkner G."/>
            <person name="Fletcher C.F."/>
            <person name="Fukushima T."/>
            <person name="Furuno M."/>
            <person name="Futaki S."/>
            <person name="Gariboldi M."/>
            <person name="Georgii-Hemming P."/>
            <person name="Gingeras T.R."/>
            <person name="Gojobori T."/>
            <person name="Green R.E."/>
            <person name="Gustincich S."/>
            <person name="Harbers M."/>
            <person name="Hayashi Y."/>
            <person name="Hensch T.K."/>
            <person name="Hirokawa N."/>
            <person name="Hill D."/>
            <person name="Huminiecki L."/>
            <person name="Iacono M."/>
            <person name="Ikeo K."/>
            <person name="Iwama A."/>
            <person name="Ishikawa T."/>
            <person name="Jakt M."/>
            <person name="Kanapin A."/>
            <person name="Katoh M."/>
            <person name="Kawasawa Y."/>
            <person name="Kelso J."/>
            <person name="Kitamura H."/>
            <person name="Kitano H."/>
            <person name="Kollias G."/>
            <person name="Krishnan S.P."/>
            <person name="Kruger A."/>
            <person name="Kummerfeld S.K."/>
            <person name="Kurochkin I.V."/>
            <person name="Lareau L.F."/>
            <person name="Lazarevic D."/>
            <person name="Lipovich L."/>
            <person name="Liu J."/>
            <person name="Liuni S."/>
            <person name="McWilliam S."/>
            <person name="Madan Babu M."/>
            <person name="Madera M."/>
            <person name="Marchionni L."/>
            <person name="Matsuda H."/>
            <person name="Matsuzawa S."/>
            <person name="Miki H."/>
            <person name="Mignone F."/>
            <person name="Miyake S."/>
            <person name="Morris K."/>
            <person name="Mottagui-Tabar S."/>
            <person name="Mulder N."/>
            <person name="Nakano N."/>
            <person name="Nakauchi H."/>
            <person name="Ng P."/>
            <person name="Nilsson R."/>
            <person name="Nishiguchi S."/>
            <person name="Nishikawa S."/>
            <person name="Nori F."/>
            <person name="Ohara O."/>
            <person name="Okazaki Y."/>
            <person name="Orlando V."/>
            <person name="Pang K.C."/>
            <person name="Pavan W.J."/>
            <person name="Pavesi G."/>
            <person name="Pesole G."/>
            <person name="Petrovsky N."/>
            <person name="Piazza S."/>
            <person name="Reed J."/>
            <person name="Reid J.F."/>
            <person name="Ring B.Z."/>
            <person name="Ringwald M."/>
            <person name="Rost B."/>
            <person name="Ruan Y."/>
            <person name="Salzberg S.L."/>
            <person name="Sandelin A."/>
            <person name="Schneider C."/>
            <person name="Schoenbach C."/>
            <person name="Sekiguchi K."/>
            <person name="Semple C.A."/>
            <person name="Seno S."/>
            <person name="Sessa L."/>
            <person name="Sheng Y."/>
            <person name="Shibata Y."/>
            <person name="Shimada H."/>
            <person name="Shimada K."/>
            <person name="Silva D."/>
            <person name="Sinclair B."/>
            <person name="Sperling S."/>
            <person name="Stupka E."/>
            <person name="Sugiura K."/>
            <person name="Sultana R."/>
            <person name="Takenaka Y."/>
            <person name="Taki K."/>
            <person name="Tammoja K."/>
            <person name="Tan S.L."/>
            <person name="Tang S."/>
            <person name="Taylor M.S."/>
            <person name="Tegner J."/>
            <person name="Teichmann S.A."/>
            <person name="Ueda H.R."/>
            <person name="van Nimwegen E."/>
            <person name="Verardo R."/>
            <person name="Wei C.L."/>
            <person name="Yagi K."/>
            <person name="Yamanishi H."/>
            <person name="Zabarovsky E."/>
            <person name="Zhu S."/>
            <person name="Zimmer A."/>
            <person name="Hide W."/>
            <person name="Bult C."/>
            <person name="Grimmond S.M."/>
            <person name="Teasdale R.D."/>
            <person name="Liu E.T."/>
            <person name="Brusic V."/>
            <person name="Quackenbush J."/>
            <person name="Wahlestedt C."/>
            <person name="Mattick J.S."/>
            <person name="Hume D.A."/>
            <person name="Kai C."/>
            <person name="Sasaki D."/>
            <person name="Tomaru Y."/>
            <person name="Fukuda S."/>
            <person name="Kanamori-Katayama M."/>
            <person name="Suzuki M."/>
            <person name="Aoki J."/>
            <person name="Arakawa T."/>
            <person name="Iida J."/>
            <person name="Imamura K."/>
            <person name="Itoh M."/>
            <person name="Kato T."/>
            <person name="Kawaji H."/>
            <person name="Kawagashira N."/>
            <person name="Kawashima T."/>
            <person name="Kojima M."/>
            <person name="Kondo S."/>
            <person name="Konno H."/>
            <person name="Nakano K."/>
            <person name="Ninomiya N."/>
            <person name="Nishio T."/>
            <person name="Okada M."/>
            <person name="Plessy C."/>
            <person name="Shibata K."/>
            <person name="Shiraki T."/>
            <person name="Suzuki S."/>
            <person name="Tagami M."/>
            <person name="Waki K."/>
            <person name="Watahiki A."/>
            <person name="Okamura-Oho Y."/>
            <person name="Suzuki H."/>
            <person name="Kawai J."/>
            <person name="Hayashizaki Y."/>
        </authorList>
    </citation>
    <scope>NUCLEOTIDE SEQUENCE [LARGE SCALE MRNA]</scope>
    <source>
        <strain>C57BL/6J</strain>
    </source>
</reference>
<reference key="2">
    <citation type="journal article" date="2004" name="Genome Res.">
        <title>The status, quality, and expansion of the NIH full-length cDNA project: the Mammalian Gene Collection (MGC).</title>
        <authorList>
            <consortium name="The MGC Project Team"/>
        </authorList>
    </citation>
    <scope>NUCLEOTIDE SEQUENCE [LARGE SCALE MRNA]</scope>
    <source>
        <strain>FVB/N-3</strain>
        <tissue>Mammary tumor</tissue>
    </source>
</reference>
<reference key="3">
    <citation type="journal article" date="2010" name="Cell">
        <title>A tissue-specific atlas of mouse protein phosphorylation and expression.</title>
        <authorList>
            <person name="Huttlin E.L."/>
            <person name="Jedrychowski M.P."/>
            <person name="Elias J.E."/>
            <person name="Goswami T."/>
            <person name="Rad R."/>
            <person name="Beausoleil S.A."/>
            <person name="Villen J."/>
            <person name="Haas W."/>
            <person name="Sowa M.E."/>
            <person name="Gygi S.P."/>
        </authorList>
    </citation>
    <scope>IDENTIFICATION BY MASS SPECTROMETRY [LARGE SCALE ANALYSIS]</scope>
    <source>
        <tissue>Brain</tissue>
    </source>
</reference>
<reference key="4">
    <citation type="journal article" date="2012" name="J. Cell. Biochem.">
        <title>SNX10 is required for osteoclast formation and resorption activity.</title>
        <authorList>
            <person name="Zhu C.H."/>
            <person name="Morse L.R."/>
            <person name="Battaglino R.A."/>
        </authorList>
    </citation>
    <scope>FUNCTION IN OSTEOCLASTOGENESIS</scope>
    <scope>SUBCELLULAR LOCATION</scope>
    <scope>TISSUE SPECIFICITY</scope>
    <scope>DEVELOPMENTAL STAGE</scope>
</reference>
<evidence type="ECO:0000250" key="1"/>
<evidence type="ECO:0000255" key="2">
    <source>
        <dbReference type="PROSITE-ProRule" id="PRU00147"/>
    </source>
</evidence>
<evidence type="ECO:0000256" key="3">
    <source>
        <dbReference type="SAM" id="MobiDB-lite"/>
    </source>
</evidence>
<evidence type="ECO:0000269" key="4">
    <source>
    </source>
</evidence>
<evidence type="ECO:0000305" key="5"/>